<accession>Q1C3I0</accession>
<sequence length="309" mass="34405">MSIRIVPKDQLGKQREKGTTAGNIPPLLFANLKSLYTRRTERLQQLALDNPLADYLDFAAKITEAQQKALHDHPLVLDMQAELVQSAASGKPPLDGSVFPRTEHWRKLLSALIAELRHDAPDHILAVLDNLDKASVHELELYADALLNRDFSQVGSEKAPFIWAALSLYWAQMASQIPGKARAEYGEHRQFCPVCGSIPVSSVVHIGTHNGLRYLHCNLCESEWHVVRIKCSNCEQTRDLNYWSLDSELAAVKAESCGDCGTYLKILYQEKDPQVEAVADDLASLILDAKMEGEGFARSSINPFLFPGE</sequence>
<gene>
    <name evidence="1" type="primary">fdhE</name>
    <name type="ordered locus">YPA_3030</name>
</gene>
<dbReference type="EMBL" id="CP000308">
    <property type="protein sequence ID" value="ABG14992.1"/>
    <property type="molecule type" value="Genomic_DNA"/>
</dbReference>
<dbReference type="RefSeq" id="WP_002209609.1">
    <property type="nucleotide sequence ID" value="NZ_CP009906.1"/>
</dbReference>
<dbReference type="SMR" id="Q1C3I0"/>
<dbReference type="GeneID" id="57974659"/>
<dbReference type="KEGG" id="ypa:YPA_3030"/>
<dbReference type="Proteomes" id="UP000001971">
    <property type="component" value="Chromosome"/>
</dbReference>
<dbReference type="GO" id="GO:0005829">
    <property type="term" value="C:cytosol"/>
    <property type="evidence" value="ECO:0007669"/>
    <property type="project" value="TreeGrafter"/>
</dbReference>
<dbReference type="GO" id="GO:0008199">
    <property type="term" value="F:ferric iron binding"/>
    <property type="evidence" value="ECO:0007669"/>
    <property type="project" value="TreeGrafter"/>
</dbReference>
<dbReference type="GO" id="GO:0051604">
    <property type="term" value="P:protein maturation"/>
    <property type="evidence" value="ECO:0007669"/>
    <property type="project" value="TreeGrafter"/>
</dbReference>
<dbReference type="CDD" id="cd16341">
    <property type="entry name" value="FdhE"/>
    <property type="match status" value="1"/>
</dbReference>
<dbReference type="FunFam" id="3.90.1670.10:FF:000001">
    <property type="entry name" value="Protein FdhE"/>
    <property type="match status" value="1"/>
</dbReference>
<dbReference type="Gene3D" id="3.90.1670.10">
    <property type="entry name" value="FdhE-like domain"/>
    <property type="match status" value="1"/>
</dbReference>
<dbReference type="HAMAP" id="MF_00611">
    <property type="entry name" value="FdeH"/>
    <property type="match status" value="1"/>
</dbReference>
<dbReference type="InterPro" id="IPR024064">
    <property type="entry name" value="FdhE-like_sf"/>
</dbReference>
<dbReference type="InterPro" id="IPR056796">
    <property type="entry name" value="FdhE_C"/>
</dbReference>
<dbReference type="InterPro" id="IPR056797">
    <property type="entry name" value="FdhE_central"/>
</dbReference>
<dbReference type="InterPro" id="IPR056774">
    <property type="entry name" value="FdhE_N"/>
</dbReference>
<dbReference type="InterPro" id="IPR006452">
    <property type="entry name" value="Formate_DH_accessory"/>
</dbReference>
<dbReference type="NCBIfam" id="TIGR01562">
    <property type="entry name" value="FdhE"/>
    <property type="match status" value="1"/>
</dbReference>
<dbReference type="NCBIfam" id="NF002925">
    <property type="entry name" value="PRK03564.1"/>
    <property type="match status" value="1"/>
</dbReference>
<dbReference type="PANTHER" id="PTHR37689">
    <property type="entry name" value="PROTEIN FDHE"/>
    <property type="match status" value="1"/>
</dbReference>
<dbReference type="PANTHER" id="PTHR37689:SF1">
    <property type="entry name" value="PROTEIN FDHE"/>
    <property type="match status" value="1"/>
</dbReference>
<dbReference type="Pfam" id="PF24860">
    <property type="entry name" value="FdhE_C"/>
    <property type="match status" value="1"/>
</dbReference>
<dbReference type="Pfam" id="PF24859">
    <property type="entry name" value="FdhE_central"/>
    <property type="match status" value="1"/>
</dbReference>
<dbReference type="Pfam" id="PF04216">
    <property type="entry name" value="FdhE_N"/>
    <property type="match status" value="1"/>
</dbReference>
<dbReference type="PIRSF" id="PIRSF018296">
    <property type="entry name" value="Format_dh_formtn"/>
    <property type="match status" value="1"/>
</dbReference>
<dbReference type="SUPFAM" id="SSF144020">
    <property type="entry name" value="FdhE-like"/>
    <property type="match status" value="1"/>
</dbReference>
<name>FDHE_YERPA</name>
<organism>
    <name type="scientific">Yersinia pestis bv. Antiqua (strain Antiqua)</name>
    <dbReference type="NCBI Taxonomy" id="360102"/>
    <lineage>
        <taxon>Bacteria</taxon>
        <taxon>Pseudomonadati</taxon>
        <taxon>Pseudomonadota</taxon>
        <taxon>Gammaproteobacteria</taxon>
        <taxon>Enterobacterales</taxon>
        <taxon>Yersiniaceae</taxon>
        <taxon>Yersinia</taxon>
    </lineage>
</organism>
<proteinExistence type="inferred from homology"/>
<feature type="chain" id="PRO_1000056719" description="Protein FdhE homolog">
    <location>
        <begin position="1"/>
        <end position="309"/>
    </location>
</feature>
<comment type="function">
    <text evidence="1">Necessary for formate dehydrogenase activity.</text>
</comment>
<comment type="subcellular location">
    <subcellularLocation>
        <location evidence="1">Cytoplasm</location>
    </subcellularLocation>
</comment>
<comment type="similarity">
    <text evidence="1">Belongs to the FdhE family.</text>
</comment>
<protein>
    <recommendedName>
        <fullName evidence="1">Protein FdhE homolog</fullName>
    </recommendedName>
</protein>
<reference key="1">
    <citation type="journal article" date="2006" name="J. Bacteriol.">
        <title>Complete genome sequence of Yersinia pestis strains Antiqua and Nepal516: evidence of gene reduction in an emerging pathogen.</title>
        <authorList>
            <person name="Chain P.S.G."/>
            <person name="Hu P."/>
            <person name="Malfatti S.A."/>
            <person name="Radnedge L."/>
            <person name="Larimer F."/>
            <person name="Vergez L.M."/>
            <person name="Worsham P."/>
            <person name="Chu M.C."/>
            <person name="Andersen G.L."/>
        </authorList>
    </citation>
    <scope>NUCLEOTIDE SEQUENCE [LARGE SCALE GENOMIC DNA]</scope>
    <source>
        <strain>Antiqua</strain>
    </source>
</reference>
<keyword id="KW-0963">Cytoplasm</keyword>
<evidence type="ECO:0000255" key="1">
    <source>
        <dbReference type="HAMAP-Rule" id="MF_00611"/>
    </source>
</evidence>